<comment type="subunit">
    <text evidence="1">Part of the 50S ribosomal subunit.</text>
</comment>
<comment type="similarity">
    <text evidence="1">Belongs to the universal ribosomal protein uL30 family.</text>
</comment>
<proteinExistence type="inferred from homology"/>
<dbReference type="EMBL" id="CP000089">
    <property type="protein sequence ID" value="AAZ45096.1"/>
    <property type="molecule type" value="Genomic_DNA"/>
</dbReference>
<dbReference type="SMR" id="Q47J85"/>
<dbReference type="STRING" id="159087.Daro_0337"/>
<dbReference type="KEGG" id="dar:Daro_0337"/>
<dbReference type="eggNOG" id="COG1841">
    <property type="taxonomic scope" value="Bacteria"/>
</dbReference>
<dbReference type="HOGENOM" id="CLU_131047_1_4_4"/>
<dbReference type="OrthoDB" id="9812790at2"/>
<dbReference type="GO" id="GO:0022625">
    <property type="term" value="C:cytosolic large ribosomal subunit"/>
    <property type="evidence" value="ECO:0007669"/>
    <property type="project" value="TreeGrafter"/>
</dbReference>
<dbReference type="GO" id="GO:0003735">
    <property type="term" value="F:structural constituent of ribosome"/>
    <property type="evidence" value="ECO:0007669"/>
    <property type="project" value="InterPro"/>
</dbReference>
<dbReference type="GO" id="GO:0006412">
    <property type="term" value="P:translation"/>
    <property type="evidence" value="ECO:0007669"/>
    <property type="project" value="UniProtKB-UniRule"/>
</dbReference>
<dbReference type="CDD" id="cd01658">
    <property type="entry name" value="Ribosomal_L30"/>
    <property type="match status" value="1"/>
</dbReference>
<dbReference type="FunFam" id="3.30.1390.20:FF:000001">
    <property type="entry name" value="50S ribosomal protein L30"/>
    <property type="match status" value="1"/>
</dbReference>
<dbReference type="Gene3D" id="3.30.1390.20">
    <property type="entry name" value="Ribosomal protein L30, ferredoxin-like fold domain"/>
    <property type="match status" value="1"/>
</dbReference>
<dbReference type="HAMAP" id="MF_01371_B">
    <property type="entry name" value="Ribosomal_uL30_B"/>
    <property type="match status" value="1"/>
</dbReference>
<dbReference type="InterPro" id="IPR036919">
    <property type="entry name" value="Ribo_uL30_ferredoxin-like_sf"/>
</dbReference>
<dbReference type="InterPro" id="IPR005996">
    <property type="entry name" value="Ribosomal_uL30_bac-type"/>
</dbReference>
<dbReference type="InterPro" id="IPR016082">
    <property type="entry name" value="Ribosomal_uL30_ferredoxin-like"/>
</dbReference>
<dbReference type="NCBIfam" id="TIGR01308">
    <property type="entry name" value="rpmD_bact"/>
    <property type="match status" value="1"/>
</dbReference>
<dbReference type="PANTHER" id="PTHR15892:SF2">
    <property type="entry name" value="LARGE RIBOSOMAL SUBUNIT PROTEIN UL30M"/>
    <property type="match status" value="1"/>
</dbReference>
<dbReference type="PANTHER" id="PTHR15892">
    <property type="entry name" value="MITOCHONDRIAL RIBOSOMAL PROTEIN L30"/>
    <property type="match status" value="1"/>
</dbReference>
<dbReference type="Pfam" id="PF00327">
    <property type="entry name" value="Ribosomal_L30"/>
    <property type="match status" value="1"/>
</dbReference>
<dbReference type="PIRSF" id="PIRSF002211">
    <property type="entry name" value="Ribosomal_L30_bac-type"/>
    <property type="match status" value="1"/>
</dbReference>
<dbReference type="SUPFAM" id="SSF55129">
    <property type="entry name" value="Ribosomal protein L30p/L7e"/>
    <property type="match status" value="1"/>
</dbReference>
<accession>Q47J85</accession>
<feature type="chain" id="PRO_0000273778" description="Large ribosomal subunit protein uL30">
    <location>
        <begin position="1"/>
        <end position="60"/>
    </location>
</feature>
<protein>
    <recommendedName>
        <fullName evidence="1">Large ribosomal subunit protein uL30</fullName>
    </recommendedName>
    <alternativeName>
        <fullName evidence="2">50S ribosomal protein L30</fullName>
    </alternativeName>
</protein>
<evidence type="ECO:0000255" key="1">
    <source>
        <dbReference type="HAMAP-Rule" id="MF_01371"/>
    </source>
</evidence>
<evidence type="ECO:0000305" key="2"/>
<gene>
    <name evidence="1" type="primary">rpmD</name>
    <name type="ordered locus">Daro_0337</name>
</gene>
<sequence>MADKKIKVTLVKSVIGTKQDHRATVKGLGLRKLNSSSELIDTPAVRGMIQKVQYLVKVEG</sequence>
<keyword id="KW-0687">Ribonucleoprotein</keyword>
<keyword id="KW-0689">Ribosomal protein</keyword>
<organism>
    <name type="scientific">Dechloromonas aromatica (strain RCB)</name>
    <dbReference type="NCBI Taxonomy" id="159087"/>
    <lineage>
        <taxon>Bacteria</taxon>
        <taxon>Pseudomonadati</taxon>
        <taxon>Pseudomonadota</taxon>
        <taxon>Betaproteobacteria</taxon>
        <taxon>Rhodocyclales</taxon>
        <taxon>Azonexaceae</taxon>
        <taxon>Dechloromonas</taxon>
    </lineage>
</organism>
<name>RL30_DECAR</name>
<reference key="1">
    <citation type="journal article" date="2009" name="BMC Genomics">
        <title>Metabolic analysis of the soil microbe Dechloromonas aromatica str. RCB: indications of a surprisingly complex life-style and cryptic anaerobic pathways for aromatic degradation.</title>
        <authorList>
            <person name="Salinero K.K."/>
            <person name="Keller K."/>
            <person name="Feil W.S."/>
            <person name="Feil H."/>
            <person name="Trong S."/>
            <person name="Di Bartolo G."/>
            <person name="Lapidus A."/>
        </authorList>
    </citation>
    <scope>NUCLEOTIDE SEQUENCE [LARGE SCALE GENOMIC DNA]</scope>
    <source>
        <strain>RCB</strain>
    </source>
</reference>